<feature type="chain" id="PRO_0000147409" description="Universal stress protein C">
    <location>
        <begin position="1"/>
        <end position="142"/>
    </location>
</feature>
<keyword id="KW-0963">Cytoplasm</keyword>
<keyword id="KW-1185">Reference proteome</keyword>
<organism>
    <name type="scientific">Escherichia coli O6:H1 (strain CFT073 / ATCC 700928 / UPEC)</name>
    <dbReference type="NCBI Taxonomy" id="199310"/>
    <lineage>
        <taxon>Bacteria</taxon>
        <taxon>Pseudomonadati</taxon>
        <taxon>Pseudomonadota</taxon>
        <taxon>Gammaproteobacteria</taxon>
        <taxon>Enterobacterales</taxon>
        <taxon>Enterobacteriaceae</taxon>
        <taxon>Escherichia</taxon>
    </lineage>
</organism>
<name>USPC_ECOL6</name>
<protein>
    <recommendedName>
        <fullName>Universal stress protein C</fullName>
    </recommendedName>
</protein>
<proteinExistence type="inferred from homology"/>
<comment type="function">
    <text evidence="1">Required for resistance to DNA-damaging agents.</text>
</comment>
<comment type="subcellular location">
    <subcellularLocation>
        <location evidence="1">Cytoplasm</location>
    </subcellularLocation>
</comment>
<comment type="similarity">
    <text evidence="2">Belongs to the universal stress protein A family.</text>
</comment>
<sequence>MSYSNILVAVAVTPESQQLLAKAVSIARPVKGHISLITLASDPEMYNQLAAPMLEDLRNVMQEETQSFLDKLIQDAGYPVDKTFIAYGELSEHILEVCRKHHFDLVICGNHNHSFFSRASCSAKRVITSSEVDVLLVPLTGD</sequence>
<gene>
    <name type="primary">uspC</name>
    <name type="ordered locus">c2309</name>
</gene>
<evidence type="ECO:0000250" key="1"/>
<evidence type="ECO:0000305" key="2"/>
<dbReference type="EMBL" id="AE014075">
    <property type="protein sequence ID" value="AAN80768.1"/>
    <property type="molecule type" value="Genomic_DNA"/>
</dbReference>
<dbReference type="RefSeq" id="WP_000122412.1">
    <property type="nucleotide sequence ID" value="NZ_CP051263.1"/>
</dbReference>
<dbReference type="SMR" id="Q8FGN7"/>
<dbReference type="STRING" id="199310.c2309"/>
<dbReference type="DNASU" id="1036912"/>
<dbReference type="KEGG" id="ecc:c2309"/>
<dbReference type="eggNOG" id="COG0589">
    <property type="taxonomic scope" value="Bacteria"/>
</dbReference>
<dbReference type="HOGENOM" id="CLU_049301_18_1_6"/>
<dbReference type="BioCyc" id="ECOL199310:C2309-MONOMER"/>
<dbReference type="Proteomes" id="UP000001410">
    <property type="component" value="Chromosome"/>
</dbReference>
<dbReference type="GO" id="GO:0005737">
    <property type="term" value="C:cytoplasm"/>
    <property type="evidence" value="ECO:0007669"/>
    <property type="project" value="UniProtKB-SubCell"/>
</dbReference>
<dbReference type="CDD" id="cd23657">
    <property type="entry name" value="USP-A-like"/>
    <property type="match status" value="1"/>
</dbReference>
<dbReference type="FunFam" id="3.40.50.620:FF:000121">
    <property type="entry name" value="Universal stress protein"/>
    <property type="match status" value="1"/>
</dbReference>
<dbReference type="Gene3D" id="3.40.50.620">
    <property type="entry name" value="HUPs"/>
    <property type="match status" value="1"/>
</dbReference>
<dbReference type="InterPro" id="IPR014729">
    <property type="entry name" value="Rossmann-like_a/b/a_fold"/>
</dbReference>
<dbReference type="InterPro" id="IPR006015">
    <property type="entry name" value="Universal_stress_UspA"/>
</dbReference>
<dbReference type="InterPro" id="IPR006016">
    <property type="entry name" value="UspA"/>
</dbReference>
<dbReference type="NCBIfam" id="NF007512">
    <property type="entry name" value="PRK10116.1"/>
    <property type="match status" value="1"/>
</dbReference>
<dbReference type="PANTHER" id="PTHR46268">
    <property type="entry name" value="STRESS RESPONSE PROTEIN NHAX"/>
    <property type="match status" value="1"/>
</dbReference>
<dbReference type="PANTHER" id="PTHR46268:SF16">
    <property type="entry name" value="UNIVERSAL STRESS PROTEIN C"/>
    <property type="match status" value="1"/>
</dbReference>
<dbReference type="Pfam" id="PF00582">
    <property type="entry name" value="Usp"/>
    <property type="match status" value="1"/>
</dbReference>
<dbReference type="PIRSF" id="PIRSF006276">
    <property type="entry name" value="UspA"/>
    <property type="match status" value="1"/>
</dbReference>
<dbReference type="SUPFAM" id="SSF52402">
    <property type="entry name" value="Adenine nucleotide alpha hydrolases-like"/>
    <property type="match status" value="1"/>
</dbReference>
<reference key="1">
    <citation type="journal article" date="2002" name="Proc. Natl. Acad. Sci. U.S.A.">
        <title>Extensive mosaic structure revealed by the complete genome sequence of uropathogenic Escherichia coli.</title>
        <authorList>
            <person name="Welch R.A."/>
            <person name="Burland V."/>
            <person name="Plunkett G. III"/>
            <person name="Redford P."/>
            <person name="Roesch P."/>
            <person name="Rasko D."/>
            <person name="Buckles E.L."/>
            <person name="Liou S.-R."/>
            <person name="Boutin A."/>
            <person name="Hackett J."/>
            <person name="Stroud D."/>
            <person name="Mayhew G.F."/>
            <person name="Rose D.J."/>
            <person name="Zhou S."/>
            <person name="Schwartz D.C."/>
            <person name="Perna N.T."/>
            <person name="Mobley H.L.T."/>
            <person name="Donnenberg M.S."/>
            <person name="Blattner F.R."/>
        </authorList>
    </citation>
    <scope>NUCLEOTIDE SEQUENCE [LARGE SCALE GENOMIC DNA]</scope>
    <source>
        <strain>CFT073 / ATCC 700928 / UPEC</strain>
    </source>
</reference>
<accession>Q8FGN7</accession>